<protein>
    <recommendedName>
        <fullName evidence="1">ORC1-type DNA replication protein 2</fullName>
    </recommendedName>
    <alternativeName>
        <fullName>ORC2</fullName>
    </alternativeName>
</protein>
<dbReference type="EMBL" id="BA000002">
    <property type="protein sequence ID" value="BAA79063.2"/>
    <property type="molecule type" value="Genomic_DNA"/>
</dbReference>
<dbReference type="PIR" id="E72770">
    <property type="entry name" value="E72770"/>
</dbReference>
<dbReference type="RefSeq" id="WP_010865528.1">
    <property type="nucleotide sequence ID" value="NC_000854.2"/>
</dbReference>
<dbReference type="PDB" id="1W5S">
    <property type="method" value="X-ray"/>
    <property type="resolution" value="2.40 A"/>
    <property type="chains" value="A/B=2-410"/>
</dbReference>
<dbReference type="PDB" id="1W5T">
    <property type="method" value="X-ray"/>
    <property type="resolution" value="2.40 A"/>
    <property type="chains" value="A/B/C=2-410"/>
</dbReference>
<dbReference type="PDBsum" id="1W5S"/>
<dbReference type="PDBsum" id="1W5T"/>
<dbReference type="SMR" id="Q9YFU8"/>
<dbReference type="STRING" id="272557.APE_0152.1"/>
<dbReference type="EnsemblBacteria" id="BAA79063">
    <property type="protein sequence ID" value="BAA79063"/>
    <property type="gene ID" value="APE_0152.1"/>
</dbReference>
<dbReference type="GeneID" id="1445685"/>
<dbReference type="KEGG" id="ape:APE_0152.1"/>
<dbReference type="PATRIC" id="fig|272557.25.peg.106"/>
<dbReference type="eggNOG" id="arCOG00467">
    <property type="taxonomic scope" value="Archaea"/>
</dbReference>
<dbReference type="EvolutionaryTrace" id="Q9YFU8"/>
<dbReference type="Proteomes" id="UP000002518">
    <property type="component" value="Chromosome"/>
</dbReference>
<dbReference type="GO" id="GO:0005524">
    <property type="term" value="F:ATP binding"/>
    <property type="evidence" value="ECO:0007669"/>
    <property type="project" value="UniProtKB-UniRule"/>
</dbReference>
<dbReference type="GO" id="GO:0016887">
    <property type="term" value="F:ATP hydrolysis activity"/>
    <property type="evidence" value="ECO:0007669"/>
    <property type="project" value="InterPro"/>
</dbReference>
<dbReference type="GO" id="GO:0003677">
    <property type="term" value="F:DNA binding"/>
    <property type="evidence" value="ECO:0007669"/>
    <property type="project" value="UniProtKB-KW"/>
</dbReference>
<dbReference type="GO" id="GO:0006260">
    <property type="term" value="P:DNA replication"/>
    <property type="evidence" value="ECO:0007669"/>
    <property type="project" value="UniProtKB-UniRule"/>
</dbReference>
<dbReference type="Gene3D" id="1.10.8.60">
    <property type="match status" value="1"/>
</dbReference>
<dbReference type="Gene3D" id="3.40.50.300">
    <property type="entry name" value="P-loop containing nucleotide triphosphate hydrolases"/>
    <property type="match status" value="1"/>
</dbReference>
<dbReference type="Gene3D" id="1.10.10.10">
    <property type="entry name" value="Winged helix-like DNA-binding domain superfamily/Winged helix DNA-binding domain"/>
    <property type="match status" value="1"/>
</dbReference>
<dbReference type="HAMAP" id="MF_01407">
    <property type="entry name" value="ORC1_type_DNA_replic_protein"/>
    <property type="match status" value="1"/>
</dbReference>
<dbReference type="InterPro" id="IPR049945">
    <property type="entry name" value="AAA_22"/>
</dbReference>
<dbReference type="InterPro" id="IPR015163">
    <property type="entry name" value="Cdc6_C"/>
</dbReference>
<dbReference type="InterPro" id="IPR054425">
    <property type="entry name" value="Cdc6_ORC1-like_ATPase_lid"/>
</dbReference>
<dbReference type="InterPro" id="IPR050311">
    <property type="entry name" value="ORC1/CDC6"/>
</dbReference>
<dbReference type="InterPro" id="IPR014277">
    <property type="entry name" value="Orc1/Cdc6_arc"/>
</dbReference>
<dbReference type="InterPro" id="IPR027417">
    <property type="entry name" value="P-loop_NTPase"/>
</dbReference>
<dbReference type="InterPro" id="IPR036388">
    <property type="entry name" value="WH-like_DNA-bd_sf"/>
</dbReference>
<dbReference type="InterPro" id="IPR036390">
    <property type="entry name" value="WH_DNA-bd_sf"/>
</dbReference>
<dbReference type="NCBIfam" id="TIGR02928">
    <property type="entry name" value="orc1/cdc6 family replication initiation protein"/>
    <property type="match status" value="1"/>
</dbReference>
<dbReference type="PANTHER" id="PTHR10763:SF26">
    <property type="entry name" value="CELL DIVISION CONTROL PROTEIN 6 HOMOLOG"/>
    <property type="match status" value="1"/>
</dbReference>
<dbReference type="PANTHER" id="PTHR10763">
    <property type="entry name" value="CELL DIVISION CONTROL PROTEIN 6-RELATED"/>
    <property type="match status" value="1"/>
</dbReference>
<dbReference type="Pfam" id="PF13401">
    <property type="entry name" value="AAA_22"/>
    <property type="match status" value="1"/>
</dbReference>
<dbReference type="Pfam" id="PF22606">
    <property type="entry name" value="Cdc6-ORC-like_ATPase_lid"/>
    <property type="match status" value="1"/>
</dbReference>
<dbReference type="Pfam" id="PF09079">
    <property type="entry name" value="Cdc6_C"/>
    <property type="match status" value="1"/>
</dbReference>
<dbReference type="SMART" id="SM01074">
    <property type="entry name" value="Cdc6_C"/>
    <property type="match status" value="1"/>
</dbReference>
<dbReference type="SUPFAM" id="SSF52540">
    <property type="entry name" value="P-loop containing nucleoside triphosphate hydrolases"/>
    <property type="match status" value="1"/>
</dbReference>
<dbReference type="SUPFAM" id="SSF46785">
    <property type="entry name" value="Winged helix' DNA-binding domain"/>
    <property type="match status" value="1"/>
</dbReference>
<gene>
    <name type="primary">orc2</name>
    <name type="ordered locus">APE_0152.1</name>
</gene>
<sequence>MLRHGLFKDRRVFDENYIPPELRVRRGEAEALARIYLNRLLSGAGLSDVNMIYGSIGRVGIGKTTLAKFTVKRVSEAAAKEGLTVKQAYVNAFNAPNLYTILSLIVRQTGYPIQVRGAPALDILKALVDNLYVENHYLLVILDEFQSMLSSPRIAAEDLYTLLRVHEEIPSRDGVNRIGFLLVASDVRALSYMREKIPQVESQIGFKLHLPAYKSRELYTILEQRAELGLRDTVWEPRHLELISDVYGEDKGGDGSARRAIVALKMACEMAEAMGRDSLSEDLVRKAVSENEAASIQTHELEALSIHELIILRLIAEATLGGMEWINAGLLRQRYEDASLTMYNVKPRGYTQYHIYLKHLTSLGLVDAKPSGRGMRGRTTLFRLAPHLPADRLIEVVDNIIQAKMASGYE</sequence>
<name>CDC62_AERPE</name>
<comment type="function">
    <text evidence="1 2">Involved in regulation of DNA replication (By similarity). Binds DNA.</text>
</comment>
<comment type="domain">
    <text evidence="2">Contains an N-terminal AAA+ ATPase domain and a C-terminal winged-helix (WH) domain.</text>
</comment>
<comment type="similarity">
    <text evidence="1">Belongs to the CDC6/cdc18 family.</text>
</comment>
<keyword id="KW-0002">3D-structure</keyword>
<keyword id="KW-0067">ATP-binding</keyword>
<keyword id="KW-0235">DNA replication</keyword>
<keyword id="KW-0238">DNA-binding</keyword>
<keyword id="KW-0547">Nucleotide-binding</keyword>
<keyword id="KW-1185">Reference proteome</keyword>
<accession>Q9YFU8</accession>
<organism>
    <name type="scientific">Aeropyrum pernix (strain ATCC 700893 / DSM 11879 / JCM 9820 / NBRC 100138 / K1)</name>
    <dbReference type="NCBI Taxonomy" id="272557"/>
    <lineage>
        <taxon>Archaea</taxon>
        <taxon>Thermoproteota</taxon>
        <taxon>Thermoprotei</taxon>
        <taxon>Desulfurococcales</taxon>
        <taxon>Desulfurococcaceae</taxon>
        <taxon>Aeropyrum</taxon>
    </lineage>
</organism>
<reference key="1">
    <citation type="journal article" date="1999" name="DNA Res.">
        <title>Complete genome sequence of an aerobic hyper-thermophilic crenarchaeon, Aeropyrum pernix K1.</title>
        <authorList>
            <person name="Kawarabayasi Y."/>
            <person name="Hino Y."/>
            <person name="Horikawa H."/>
            <person name="Yamazaki S."/>
            <person name="Haikawa Y."/>
            <person name="Jin-no K."/>
            <person name="Takahashi M."/>
            <person name="Sekine M."/>
            <person name="Baba S."/>
            <person name="Ankai A."/>
            <person name="Kosugi H."/>
            <person name="Hosoyama A."/>
            <person name="Fukui S."/>
            <person name="Nagai Y."/>
            <person name="Nishijima K."/>
            <person name="Nakazawa H."/>
            <person name="Takamiya M."/>
            <person name="Masuda S."/>
            <person name="Funahashi T."/>
            <person name="Tanaka T."/>
            <person name="Kudoh Y."/>
            <person name="Yamazaki J."/>
            <person name="Kushida N."/>
            <person name="Oguchi A."/>
            <person name="Aoki K."/>
            <person name="Kubota K."/>
            <person name="Nakamura Y."/>
            <person name="Nomura N."/>
            <person name="Sako Y."/>
            <person name="Kikuchi H."/>
        </authorList>
    </citation>
    <scope>NUCLEOTIDE SEQUENCE [LARGE SCALE GENOMIC DNA]</scope>
    <source>
        <strain>ATCC 700893 / DSM 11879 / JCM 9820 / NBRC 100138 / K1</strain>
    </source>
</reference>
<reference key="2">
    <citation type="journal article" date="2004" name="J. Mol. Biol.">
        <title>Conformational changes induced by nucleotide binding in Cdc6/ORC from Aeropyrum pernix.</title>
        <authorList>
            <person name="Singleton M.R."/>
            <person name="Morales R."/>
            <person name="Grainge I."/>
            <person name="Cook N."/>
            <person name="Isupov M.N."/>
            <person name="Wigley D.B."/>
        </authorList>
    </citation>
    <scope>X-RAY CRYSTALLOGRAPHY (2.40 ANGSTROMS) OF 2-410 IN COMPLEX WITH DNA AND ATP</scope>
    <scope>FUNCTION</scope>
    <scope>DNA-BINDING</scope>
    <scope>DOMAIN</scope>
</reference>
<evidence type="ECO:0000255" key="1">
    <source>
        <dbReference type="HAMAP-Rule" id="MF_01407"/>
    </source>
</evidence>
<evidence type="ECO:0000269" key="2">
    <source>
    </source>
</evidence>
<evidence type="ECO:0007829" key="3">
    <source>
        <dbReference type="PDB" id="1W5S"/>
    </source>
</evidence>
<proteinExistence type="evidence at protein level"/>
<feature type="chain" id="PRO_0000421876" description="ORC1-type DNA replication protein 2">
    <location>
        <begin position="1"/>
        <end position="410"/>
    </location>
</feature>
<feature type="binding site" evidence="1 2">
    <location>
        <begin position="60"/>
        <end position="65"/>
    </location>
    <ligand>
        <name>ATP</name>
        <dbReference type="ChEBI" id="CHEBI:30616"/>
    </ligand>
</feature>
<feature type="binding site" evidence="1 2">
    <location>
        <position position="213"/>
    </location>
    <ligand>
        <name>ATP</name>
        <dbReference type="ChEBI" id="CHEBI:30616"/>
    </ligand>
</feature>
<feature type="binding site" evidence="1 2">
    <location>
        <position position="225"/>
    </location>
    <ligand>
        <name>ATP</name>
        <dbReference type="ChEBI" id="CHEBI:30616"/>
    </ligand>
</feature>
<feature type="helix" evidence="3">
    <location>
        <begin position="10"/>
        <end position="13"/>
    </location>
</feature>
<feature type="strand" evidence="3">
    <location>
        <begin position="23"/>
        <end position="25"/>
    </location>
</feature>
<feature type="helix" evidence="3">
    <location>
        <begin position="27"/>
        <end position="41"/>
    </location>
</feature>
<feature type="strand" evidence="3">
    <location>
        <begin position="49"/>
        <end position="54"/>
    </location>
</feature>
<feature type="strand" evidence="3">
    <location>
        <begin position="60"/>
        <end position="62"/>
    </location>
</feature>
<feature type="helix" evidence="3">
    <location>
        <begin position="63"/>
        <end position="80"/>
    </location>
</feature>
<feature type="strand" evidence="3">
    <location>
        <begin position="85"/>
        <end position="91"/>
    </location>
</feature>
<feature type="helix" evidence="3">
    <location>
        <begin position="92"/>
        <end position="94"/>
    </location>
</feature>
<feature type="helix" evidence="3">
    <location>
        <begin position="98"/>
        <end position="109"/>
    </location>
</feature>
<feature type="helix" evidence="3">
    <location>
        <begin position="120"/>
        <end position="134"/>
    </location>
</feature>
<feature type="strand" evidence="3">
    <location>
        <begin position="137"/>
        <end position="144"/>
    </location>
</feature>
<feature type="helix" evidence="3">
    <location>
        <begin position="146"/>
        <end position="149"/>
    </location>
</feature>
<feature type="helix" evidence="3">
    <location>
        <begin position="156"/>
        <end position="163"/>
    </location>
</feature>
<feature type="helix" evidence="3">
    <location>
        <begin position="165"/>
        <end position="168"/>
    </location>
</feature>
<feature type="strand" evidence="3">
    <location>
        <begin position="177"/>
        <end position="186"/>
    </location>
</feature>
<feature type="helix" evidence="3">
    <location>
        <begin position="188"/>
        <end position="196"/>
    </location>
</feature>
<feature type="helix" evidence="3">
    <location>
        <begin position="198"/>
        <end position="201"/>
    </location>
</feature>
<feature type="strand" evidence="3">
    <location>
        <begin position="205"/>
        <end position="209"/>
    </location>
</feature>
<feature type="helix" evidence="3">
    <location>
        <begin position="215"/>
        <end position="229"/>
    </location>
</feature>
<feature type="helix" evidence="3">
    <location>
        <begin position="237"/>
        <end position="247"/>
    </location>
</feature>
<feature type="helix" evidence="3">
    <location>
        <begin position="249"/>
        <end position="251"/>
    </location>
</feature>
<feature type="helix" evidence="3">
    <location>
        <begin position="257"/>
        <end position="273"/>
    </location>
</feature>
<feature type="helix" evidence="3">
    <location>
        <begin position="281"/>
        <end position="290"/>
    </location>
</feature>
<feature type="strand" evidence="3">
    <location>
        <begin position="300"/>
        <end position="304"/>
    </location>
</feature>
<feature type="helix" evidence="3">
    <location>
        <begin position="306"/>
        <end position="320"/>
    </location>
</feature>
<feature type="strand" evidence="3">
    <location>
        <begin position="324"/>
        <end position="326"/>
    </location>
</feature>
<feature type="helix" evidence="3">
    <location>
        <begin position="328"/>
        <end position="343"/>
    </location>
</feature>
<feature type="helix" evidence="3">
    <location>
        <begin position="350"/>
        <end position="362"/>
    </location>
</feature>
<feature type="strand" evidence="3">
    <location>
        <begin position="365"/>
        <end position="369"/>
    </location>
</feature>
<feature type="strand" evidence="3">
    <location>
        <begin position="381"/>
        <end position="384"/>
    </location>
</feature>
<feature type="helix" evidence="3">
    <location>
        <begin position="390"/>
        <end position="405"/>
    </location>
</feature>